<gene>
    <name evidence="1" type="primary">ribH</name>
    <name type="ordered locus">XF_0954</name>
</gene>
<evidence type="ECO:0000255" key="1">
    <source>
        <dbReference type="HAMAP-Rule" id="MF_00178"/>
    </source>
</evidence>
<keyword id="KW-0686">Riboflavin biosynthesis</keyword>
<keyword id="KW-0808">Transferase</keyword>
<comment type="function">
    <text evidence="1">Catalyzes the formation of 6,7-dimethyl-8-ribityllumazine by condensation of 5-amino-6-(D-ribitylamino)uracil with 3,4-dihydroxy-2-butanone 4-phosphate. This is the penultimate step in the biosynthesis of riboflavin.</text>
</comment>
<comment type="catalytic activity">
    <reaction evidence="1">
        <text>(2S)-2-hydroxy-3-oxobutyl phosphate + 5-amino-6-(D-ribitylamino)uracil = 6,7-dimethyl-8-(1-D-ribityl)lumazine + phosphate + 2 H2O + H(+)</text>
        <dbReference type="Rhea" id="RHEA:26152"/>
        <dbReference type="ChEBI" id="CHEBI:15377"/>
        <dbReference type="ChEBI" id="CHEBI:15378"/>
        <dbReference type="ChEBI" id="CHEBI:15934"/>
        <dbReference type="ChEBI" id="CHEBI:43474"/>
        <dbReference type="ChEBI" id="CHEBI:58201"/>
        <dbReference type="ChEBI" id="CHEBI:58830"/>
        <dbReference type="EC" id="2.5.1.78"/>
    </reaction>
</comment>
<comment type="pathway">
    <text evidence="1">Cofactor biosynthesis; riboflavin biosynthesis; riboflavin from 2-hydroxy-3-oxobutyl phosphate and 5-amino-6-(D-ribitylamino)uracil: step 1/2.</text>
</comment>
<comment type="subunit">
    <text evidence="1">Forms an icosahedral capsid composed of 60 subunits, arranged as a dodecamer of pentamers.</text>
</comment>
<comment type="similarity">
    <text evidence="1">Belongs to the DMRL synthase family.</text>
</comment>
<protein>
    <recommendedName>
        <fullName evidence="1">6,7-dimethyl-8-ribityllumazine synthase</fullName>
        <shortName evidence="1">DMRL synthase</shortName>
        <shortName evidence="1">LS</shortName>
        <shortName evidence="1">Lumazine synthase</shortName>
        <ecNumber evidence="1">2.5.1.78</ecNumber>
    </recommendedName>
</protein>
<organism>
    <name type="scientific">Xylella fastidiosa (strain 9a5c)</name>
    <dbReference type="NCBI Taxonomy" id="160492"/>
    <lineage>
        <taxon>Bacteria</taxon>
        <taxon>Pseudomonadati</taxon>
        <taxon>Pseudomonadota</taxon>
        <taxon>Gammaproteobacteria</taxon>
        <taxon>Lysobacterales</taxon>
        <taxon>Lysobacteraceae</taxon>
        <taxon>Xylella</taxon>
    </lineage>
</organism>
<name>RISB_XYLFA</name>
<dbReference type="EC" id="2.5.1.78" evidence="1"/>
<dbReference type="EMBL" id="AE003849">
    <property type="protein sequence ID" value="AAF83764.1"/>
    <property type="molecule type" value="Genomic_DNA"/>
</dbReference>
<dbReference type="PIR" id="C82741">
    <property type="entry name" value="C82741"/>
</dbReference>
<dbReference type="RefSeq" id="WP_010893473.1">
    <property type="nucleotide sequence ID" value="NC_002488.3"/>
</dbReference>
<dbReference type="SMR" id="Q9PES4"/>
<dbReference type="STRING" id="160492.XF_0954"/>
<dbReference type="KEGG" id="xfa:XF_0954"/>
<dbReference type="eggNOG" id="COG0054">
    <property type="taxonomic scope" value="Bacteria"/>
</dbReference>
<dbReference type="HOGENOM" id="CLU_089358_1_2_6"/>
<dbReference type="BRENDA" id="2.5.1.78">
    <property type="organism ID" value="6734"/>
</dbReference>
<dbReference type="UniPathway" id="UPA00275">
    <property type="reaction ID" value="UER00404"/>
</dbReference>
<dbReference type="Proteomes" id="UP000000812">
    <property type="component" value="Chromosome"/>
</dbReference>
<dbReference type="GO" id="GO:0005829">
    <property type="term" value="C:cytosol"/>
    <property type="evidence" value="ECO:0007669"/>
    <property type="project" value="TreeGrafter"/>
</dbReference>
<dbReference type="GO" id="GO:0009349">
    <property type="term" value="C:riboflavin synthase complex"/>
    <property type="evidence" value="ECO:0007669"/>
    <property type="project" value="InterPro"/>
</dbReference>
<dbReference type="GO" id="GO:0000906">
    <property type="term" value="F:6,7-dimethyl-8-ribityllumazine synthase activity"/>
    <property type="evidence" value="ECO:0007669"/>
    <property type="project" value="UniProtKB-UniRule"/>
</dbReference>
<dbReference type="GO" id="GO:0009231">
    <property type="term" value="P:riboflavin biosynthetic process"/>
    <property type="evidence" value="ECO:0007669"/>
    <property type="project" value="UniProtKB-UniRule"/>
</dbReference>
<dbReference type="CDD" id="cd09209">
    <property type="entry name" value="Lumazine_synthase-I"/>
    <property type="match status" value="1"/>
</dbReference>
<dbReference type="Gene3D" id="3.40.50.960">
    <property type="entry name" value="Lumazine/riboflavin synthase"/>
    <property type="match status" value="1"/>
</dbReference>
<dbReference type="HAMAP" id="MF_00178">
    <property type="entry name" value="Lumazine_synth"/>
    <property type="match status" value="1"/>
</dbReference>
<dbReference type="InterPro" id="IPR034964">
    <property type="entry name" value="LS"/>
</dbReference>
<dbReference type="InterPro" id="IPR002180">
    <property type="entry name" value="LS/RS"/>
</dbReference>
<dbReference type="InterPro" id="IPR036467">
    <property type="entry name" value="LS/RS_sf"/>
</dbReference>
<dbReference type="NCBIfam" id="TIGR00114">
    <property type="entry name" value="lumazine-synth"/>
    <property type="match status" value="1"/>
</dbReference>
<dbReference type="PANTHER" id="PTHR21058:SF0">
    <property type="entry name" value="6,7-DIMETHYL-8-RIBITYLLUMAZINE SYNTHASE"/>
    <property type="match status" value="1"/>
</dbReference>
<dbReference type="PANTHER" id="PTHR21058">
    <property type="entry name" value="6,7-DIMETHYL-8-RIBITYLLUMAZINE SYNTHASE DMRL SYNTHASE LUMAZINE SYNTHASE"/>
    <property type="match status" value="1"/>
</dbReference>
<dbReference type="Pfam" id="PF00885">
    <property type="entry name" value="DMRL_synthase"/>
    <property type="match status" value="1"/>
</dbReference>
<dbReference type="SUPFAM" id="SSF52121">
    <property type="entry name" value="Lumazine synthase"/>
    <property type="match status" value="1"/>
</dbReference>
<proteinExistence type="inferred from homology"/>
<sequence length="154" mass="16230">MTHYEGDLRPAGARFVIVCSRWNARITDALVAGACRTLVDNGVSDDAVDVVRVPGAWEIPIVANLLAQVGQHAAIIALGCVVRGDTRHYEHVADLCAEGMMSVQMQTGVPVLNGVLAVECIKDAEMRAGGSHGNKGAETALAALEMVSLLEKLP</sequence>
<reference key="1">
    <citation type="journal article" date="2000" name="Nature">
        <title>The genome sequence of the plant pathogen Xylella fastidiosa.</title>
        <authorList>
            <person name="Simpson A.J.G."/>
            <person name="Reinach F.C."/>
            <person name="Arruda P."/>
            <person name="Abreu F.A."/>
            <person name="Acencio M."/>
            <person name="Alvarenga R."/>
            <person name="Alves L.M.C."/>
            <person name="Araya J.E."/>
            <person name="Baia G.S."/>
            <person name="Baptista C.S."/>
            <person name="Barros M.H."/>
            <person name="Bonaccorsi E.D."/>
            <person name="Bordin S."/>
            <person name="Bove J.M."/>
            <person name="Briones M.R.S."/>
            <person name="Bueno M.R.P."/>
            <person name="Camargo A.A."/>
            <person name="Camargo L.E.A."/>
            <person name="Carraro D.M."/>
            <person name="Carrer H."/>
            <person name="Colauto N.B."/>
            <person name="Colombo C."/>
            <person name="Costa F.F."/>
            <person name="Costa M.C.R."/>
            <person name="Costa-Neto C.M."/>
            <person name="Coutinho L.L."/>
            <person name="Cristofani M."/>
            <person name="Dias-Neto E."/>
            <person name="Docena C."/>
            <person name="El-Dorry H."/>
            <person name="Facincani A.P."/>
            <person name="Ferreira A.J.S."/>
            <person name="Ferreira V.C.A."/>
            <person name="Ferro J.A."/>
            <person name="Fraga J.S."/>
            <person name="Franca S.C."/>
            <person name="Franco M.C."/>
            <person name="Frohme M."/>
            <person name="Furlan L.R."/>
            <person name="Garnier M."/>
            <person name="Goldman G.H."/>
            <person name="Goldman M.H.S."/>
            <person name="Gomes S.L."/>
            <person name="Gruber A."/>
            <person name="Ho P.L."/>
            <person name="Hoheisel J.D."/>
            <person name="Junqueira M.L."/>
            <person name="Kemper E.L."/>
            <person name="Kitajima J.P."/>
            <person name="Krieger J.E."/>
            <person name="Kuramae E.E."/>
            <person name="Laigret F."/>
            <person name="Lambais M.R."/>
            <person name="Leite L.C.C."/>
            <person name="Lemos E.G.M."/>
            <person name="Lemos M.V.F."/>
            <person name="Lopes S.A."/>
            <person name="Lopes C.R."/>
            <person name="Machado J.A."/>
            <person name="Machado M.A."/>
            <person name="Madeira A.M.B.N."/>
            <person name="Madeira H.M.F."/>
            <person name="Marino C.L."/>
            <person name="Marques M.V."/>
            <person name="Martins E.A.L."/>
            <person name="Martins E.M.F."/>
            <person name="Matsukuma A.Y."/>
            <person name="Menck C.F.M."/>
            <person name="Miracca E.C."/>
            <person name="Miyaki C.Y."/>
            <person name="Monteiro-Vitorello C.B."/>
            <person name="Moon D.H."/>
            <person name="Nagai M.A."/>
            <person name="Nascimento A.L.T.O."/>
            <person name="Netto L.E.S."/>
            <person name="Nhani A. Jr."/>
            <person name="Nobrega F.G."/>
            <person name="Nunes L.R."/>
            <person name="Oliveira M.A."/>
            <person name="de Oliveira M.C."/>
            <person name="de Oliveira R.C."/>
            <person name="Palmieri D.A."/>
            <person name="Paris A."/>
            <person name="Peixoto B.R."/>
            <person name="Pereira G.A.G."/>
            <person name="Pereira H.A. Jr."/>
            <person name="Pesquero J.B."/>
            <person name="Quaggio R.B."/>
            <person name="Roberto P.G."/>
            <person name="Rodrigues V."/>
            <person name="de Rosa A.J.M."/>
            <person name="de Rosa V.E. Jr."/>
            <person name="de Sa R.G."/>
            <person name="Santelli R.V."/>
            <person name="Sawasaki H.E."/>
            <person name="da Silva A.C.R."/>
            <person name="da Silva A.M."/>
            <person name="da Silva F.R."/>
            <person name="Silva W.A. Jr."/>
            <person name="da Silveira J.F."/>
            <person name="Silvestri M.L.Z."/>
            <person name="Siqueira W.J."/>
            <person name="de Souza A.A."/>
            <person name="de Souza A.P."/>
            <person name="Terenzi M.F."/>
            <person name="Truffi D."/>
            <person name="Tsai S.M."/>
            <person name="Tsuhako M.H."/>
            <person name="Vallada H."/>
            <person name="Van Sluys M.A."/>
            <person name="Verjovski-Almeida S."/>
            <person name="Vettore A.L."/>
            <person name="Zago M.A."/>
            <person name="Zatz M."/>
            <person name="Meidanis J."/>
            <person name="Setubal J.C."/>
        </authorList>
    </citation>
    <scope>NUCLEOTIDE SEQUENCE [LARGE SCALE GENOMIC DNA]</scope>
    <source>
        <strain>9a5c</strain>
    </source>
</reference>
<accession>Q9PES4</accession>
<feature type="chain" id="PRO_0000134836" description="6,7-dimethyl-8-ribityllumazine synthase">
    <location>
        <begin position="1"/>
        <end position="154"/>
    </location>
</feature>
<feature type="active site" description="Proton donor" evidence="1">
    <location>
        <position position="88"/>
    </location>
</feature>
<feature type="binding site" evidence="1">
    <location>
        <position position="22"/>
    </location>
    <ligand>
        <name>5-amino-6-(D-ribitylamino)uracil</name>
        <dbReference type="ChEBI" id="CHEBI:15934"/>
    </ligand>
</feature>
<feature type="binding site" evidence="1">
    <location>
        <begin position="56"/>
        <end position="58"/>
    </location>
    <ligand>
        <name>5-amino-6-(D-ribitylamino)uracil</name>
        <dbReference type="ChEBI" id="CHEBI:15934"/>
    </ligand>
</feature>
<feature type="binding site" evidence="1">
    <location>
        <begin position="80"/>
        <end position="82"/>
    </location>
    <ligand>
        <name>5-amino-6-(D-ribitylamino)uracil</name>
        <dbReference type="ChEBI" id="CHEBI:15934"/>
    </ligand>
</feature>
<feature type="binding site" evidence="1">
    <location>
        <begin position="85"/>
        <end position="86"/>
    </location>
    <ligand>
        <name>(2S)-2-hydroxy-3-oxobutyl phosphate</name>
        <dbReference type="ChEBI" id="CHEBI:58830"/>
    </ligand>
</feature>
<feature type="binding site" evidence="1">
    <location>
        <position position="113"/>
    </location>
    <ligand>
        <name>5-amino-6-(D-ribitylamino)uracil</name>
        <dbReference type="ChEBI" id="CHEBI:15934"/>
    </ligand>
</feature>
<feature type="binding site" evidence="1">
    <location>
        <position position="127"/>
    </location>
    <ligand>
        <name>(2S)-2-hydroxy-3-oxobutyl phosphate</name>
        <dbReference type="ChEBI" id="CHEBI:58830"/>
    </ligand>
</feature>